<keyword id="KW-0249">Electron transport</keyword>
<keyword id="KW-0349">Heme</keyword>
<keyword id="KW-0408">Iron</keyword>
<keyword id="KW-0472">Membrane</keyword>
<keyword id="KW-0479">Metal-binding</keyword>
<keyword id="KW-0496">Mitochondrion</keyword>
<keyword id="KW-0999">Mitochondrion inner membrane</keyword>
<keyword id="KW-0679">Respiratory chain</keyword>
<keyword id="KW-0812">Transmembrane</keyword>
<keyword id="KW-1133">Transmembrane helix</keyword>
<keyword id="KW-0813">Transport</keyword>
<keyword id="KW-0830">Ubiquinone</keyword>
<feature type="chain" id="PRO_0000061661" description="Cytochrome b">
    <location>
        <begin position="1"/>
        <end position="379"/>
    </location>
</feature>
<feature type="transmembrane region" description="Helical" evidence="2">
    <location>
        <begin position="33"/>
        <end position="53"/>
    </location>
</feature>
<feature type="transmembrane region" description="Helical" evidence="2">
    <location>
        <begin position="77"/>
        <end position="98"/>
    </location>
</feature>
<feature type="transmembrane region" description="Helical" evidence="2">
    <location>
        <begin position="113"/>
        <end position="133"/>
    </location>
</feature>
<feature type="transmembrane region" description="Helical" evidence="2">
    <location>
        <begin position="178"/>
        <end position="198"/>
    </location>
</feature>
<feature type="transmembrane region" description="Helical" evidence="2">
    <location>
        <begin position="226"/>
        <end position="246"/>
    </location>
</feature>
<feature type="transmembrane region" description="Helical" evidence="2">
    <location>
        <begin position="288"/>
        <end position="308"/>
    </location>
</feature>
<feature type="transmembrane region" description="Helical" evidence="2">
    <location>
        <begin position="320"/>
        <end position="340"/>
    </location>
</feature>
<feature type="transmembrane region" description="Helical" evidence="2">
    <location>
        <begin position="347"/>
        <end position="367"/>
    </location>
</feature>
<feature type="binding site" description="axial binding residue" evidence="2">
    <location>
        <position position="83"/>
    </location>
    <ligand>
        <name>heme b</name>
        <dbReference type="ChEBI" id="CHEBI:60344"/>
        <label>b562</label>
    </ligand>
    <ligandPart>
        <name>Fe</name>
        <dbReference type="ChEBI" id="CHEBI:18248"/>
    </ligandPart>
</feature>
<feature type="binding site" description="axial binding residue" evidence="2">
    <location>
        <position position="97"/>
    </location>
    <ligand>
        <name>heme b</name>
        <dbReference type="ChEBI" id="CHEBI:60344"/>
        <label>b566</label>
    </ligand>
    <ligandPart>
        <name>Fe</name>
        <dbReference type="ChEBI" id="CHEBI:18248"/>
    </ligandPart>
</feature>
<feature type="binding site" description="axial binding residue" evidence="2">
    <location>
        <position position="182"/>
    </location>
    <ligand>
        <name>heme b</name>
        <dbReference type="ChEBI" id="CHEBI:60344"/>
        <label>b562</label>
    </ligand>
    <ligandPart>
        <name>Fe</name>
        <dbReference type="ChEBI" id="CHEBI:18248"/>
    </ligandPart>
</feature>
<feature type="binding site" description="axial binding residue" evidence="2">
    <location>
        <position position="196"/>
    </location>
    <ligand>
        <name>heme b</name>
        <dbReference type="ChEBI" id="CHEBI:60344"/>
        <label>b566</label>
    </ligand>
    <ligandPart>
        <name>Fe</name>
        <dbReference type="ChEBI" id="CHEBI:18248"/>
    </ligandPart>
</feature>
<feature type="binding site" evidence="2">
    <location>
        <position position="201"/>
    </location>
    <ligand>
        <name>a ubiquinone</name>
        <dbReference type="ChEBI" id="CHEBI:16389"/>
    </ligand>
</feature>
<proteinExistence type="inferred from homology"/>
<geneLocation type="mitochondrion"/>
<evidence type="ECO:0000250" key="1"/>
<evidence type="ECO:0000250" key="2">
    <source>
        <dbReference type="UniProtKB" id="P00157"/>
    </source>
</evidence>
<evidence type="ECO:0000255" key="3">
    <source>
        <dbReference type="PROSITE-ProRule" id="PRU00967"/>
    </source>
</evidence>
<evidence type="ECO:0000255" key="4">
    <source>
        <dbReference type="PROSITE-ProRule" id="PRU00968"/>
    </source>
</evidence>
<comment type="function">
    <text evidence="2">Component of the ubiquinol-cytochrome c reductase complex (complex III or cytochrome b-c1 complex) that is part of the mitochondrial respiratory chain. The b-c1 complex mediates electron transfer from ubiquinol to cytochrome c. Contributes to the generation of a proton gradient across the mitochondrial membrane that is then used for ATP synthesis.</text>
</comment>
<comment type="cofactor">
    <cofactor evidence="2">
        <name>heme b</name>
        <dbReference type="ChEBI" id="CHEBI:60344"/>
    </cofactor>
    <text evidence="2">Binds 2 heme b groups non-covalently.</text>
</comment>
<comment type="subunit">
    <text evidence="2">The cytochrome bc1 complex contains 11 subunits: 3 respiratory subunits (MT-CYB, CYC1 and UQCRFS1), 2 core proteins (UQCRC1 and UQCRC2) and 6 low-molecular weight proteins (UQCRH/QCR6, UQCRB/QCR7, UQCRQ/QCR8, UQCR10/QCR9, UQCR11/QCR10 and a cleavage product of UQCRFS1). This cytochrome bc1 complex then forms a dimer.</text>
</comment>
<comment type="subcellular location">
    <subcellularLocation>
        <location evidence="2">Mitochondrion inner membrane</location>
        <topology evidence="2">Multi-pass membrane protein</topology>
    </subcellularLocation>
</comment>
<comment type="miscellaneous">
    <text evidence="1">Heme 1 (or BL or b562) is low-potential and absorbs at about 562 nm, and heme 2 (or BH or b566) is high-potential and absorbs at about 566 nm.</text>
</comment>
<comment type="similarity">
    <text evidence="3 4">Belongs to the cytochrome b family.</text>
</comment>
<comment type="caution">
    <text evidence="2">The full-length protein contains only eight transmembrane helices, not nine as predicted by bioinformatics tools.</text>
</comment>
<dbReference type="EMBL" id="AF215803">
    <property type="protein sequence ID" value="AAL55624.1"/>
    <property type="molecule type" value="Genomic_DNA"/>
</dbReference>
<dbReference type="SMR" id="Q8WEK7"/>
<dbReference type="GO" id="GO:0005743">
    <property type="term" value="C:mitochondrial inner membrane"/>
    <property type="evidence" value="ECO:0007669"/>
    <property type="project" value="UniProtKB-SubCell"/>
</dbReference>
<dbReference type="GO" id="GO:0045275">
    <property type="term" value="C:respiratory chain complex III"/>
    <property type="evidence" value="ECO:0007669"/>
    <property type="project" value="InterPro"/>
</dbReference>
<dbReference type="GO" id="GO:0046872">
    <property type="term" value="F:metal ion binding"/>
    <property type="evidence" value="ECO:0007669"/>
    <property type="project" value="UniProtKB-KW"/>
</dbReference>
<dbReference type="GO" id="GO:0008121">
    <property type="term" value="F:ubiquinol-cytochrome-c reductase activity"/>
    <property type="evidence" value="ECO:0007669"/>
    <property type="project" value="InterPro"/>
</dbReference>
<dbReference type="GO" id="GO:0006122">
    <property type="term" value="P:mitochondrial electron transport, ubiquinol to cytochrome c"/>
    <property type="evidence" value="ECO:0007669"/>
    <property type="project" value="TreeGrafter"/>
</dbReference>
<dbReference type="CDD" id="cd00290">
    <property type="entry name" value="cytochrome_b_C"/>
    <property type="match status" value="1"/>
</dbReference>
<dbReference type="CDD" id="cd00284">
    <property type="entry name" value="Cytochrome_b_N"/>
    <property type="match status" value="1"/>
</dbReference>
<dbReference type="FunFam" id="1.20.810.10:FF:000002">
    <property type="entry name" value="Cytochrome b"/>
    <property type="match status" value="1"/>
</dbReference>
<dbReference type="Gene3D" id="1.20.810.10">
    <property type="entry name" value="Cytochrome Bc1 Complex, Chain C"/>
    <property type="match status" value="1"/>
</dbReference>
<dbReference type="InterPro" id="IPR005798">
    <property type="entry name" value="Cyt_b/b6_C"/>
</dbReference>
<dbReference type="InterPro" id="IPR036150">
    <property type="entry name" value="Cyt_b/b6_C_sf"/>
</dbReference>
<dbReference type="InterPro" id="IPR005797">
    <property type="entry name" value="Cyt_b/b6_N"/>
</dbReference>
<dbReference type="InterPro" id="IPR027387">
    <property type="entry name" value="Cytb/b6-like_sf"/>
</dbReference>
<dbReference type="InterPro" id="IPR030689">
    <property type="entry name" value="Cytochrome_b"/>
</dbReference>
<dbReference type="InterPro" id="IPR048260">
    <property type="entry name" value="Cytochrome_b_C_euk/bac"/>
</dbReference>
<dbReference type="InterPro" id="IPR048259">
    <property type="entry name" value="Cytochrome_b_N_euk/bac"/>
</dbReference>
<dbReference type="InterPro" id="IPR016174">
    <property type="entry name" value="Di-haem_cyt_TM"/>
</dbReference>
<dbReference type="PANTHER" id="PTHR19271">
    <property type="entry name" value="CYTOCHROME B"/>
    <property type="match status" value="1"/>
</dbReference>
<dbReference type="PANTHER" id="PTHR19271:SF16">
    <property type="entry name" value="CYTOCHROME B"/>
    <property type="match status" value="1"/>
</dbReference>
<dbReference type="Pfam" id="PF00032">
    <property type="entry name" value="Cytochrom_B_C"/>
    <property type="match status" value="1"/>
</dbReference>
<dbReference type="Pfam" id="PF00033">
    <property type="entry name" value="Cytochrome_B"/>
    <property type="match status" value="1"/>
</dbReference>
<dbReference type="PIRSF" id="PIRSF038885">
    <property type="entry name" value="COB"/>
    <property type="match status" value="1"/>
</dbReference>
<dbReference type="SUPFAM" id="SSF81648">
    <property type="entry name" value="a domain/subunit of cytochrome bc1 complex (Ubiquinol-cytochrome c reductase)"/>
    <property type="match status" value="1"/>
</dbReference>
<dbReference type="SUPFAM" id="SSF81342">
    <property type="entry name" value="Transmembrane di-heme cytochromes"/>
    <property type="match status" value="1"/>
</dbReference>
<dbReference type="PROSITE" id="PS51003">
    <property type="entry name" value="CYTB_CTER"/>
    <property type="match status" value="1"/>
</dbReference>
<dbReference type="PROSITE" id="PS51002">
    <property type="entry name" value="CYTB_NTER"/>
    <property type="match status" value="1"/>
</dbReference>
<name>CYB_THOMA</name>
<gene>
    <name type="primary">MT-CYB</name>
    <name type="synonym">COB</name>
    <name type="synonym">CYTB</name>
    <name type="synonym">MTCYB</name>
</gene>
<accession>Q8WEK7</accession>
<reference key="1">
    <citation type="submission" date="1999-12" db="EMBL/GenBank/DDBJ databases">
        <title>Phylogeographic relationships of Pacific northwestern pocket gophers (Thomomys mazama) inferred from mitochondrial and nuclear cytochrome b sequences.</title>
        <authorList>
            <person name="Steinberg E.K."/>
        </authorList>
    </citation>
    <scope>NUCLEOTIDE SEQUENCE [GENOMIC DNA]</scope>
    <source>
        <strain>Isolate PAG74</strain>
    </source>
</reference>
<organism>
    <name type="scientific">Thomomys mazama</name>
    <name type="common">Western pocket gopher</name>
    <dbReference type="NCBI Taxonomy" id="50723"/>
    <lineage>
        <taxon>Eukaryota</taxon>
        <taxon>Metazoa</taxon>
        <taxon>Chordata</taxon>
        <taxon>Craniata</taxon>
        <taxon>Vertebrata</taxon>
        <taxon>Euteleostomi</taxon>
        <taxon>Mammalia</taxon>
        <taxon>Eutheria</taxon>
        <taxon>Euarchontoglires</taxon>
        <taxon>Glires</taxon>
        <taxon>Rodentia</taxon>
        <taxon>Castorimorpha</taxon>
        <taxon>Geomyidae</taxon>
        <taxon>Thomomys</taxon>
    </lineage>
</organism>
<sequence length="379" mass="43030">MTIIRKSHPLFKIINHAFIDLPTPPNISGLWNFGSLLGMCLVLQIFTGLFLAMHYTSDTLTAFSSVTHICRDVNYGWLIRYMHANGASLFFICLYIHIGRGIYYGSYLYKETWNIGILLLFLTMATAFVGYVLPWGQMSFWGATVITNLLSAIPYVGQDLVEWIWGGFSVDKATLTRFFAFHFILPFIIAALAMVHLLFLHETGSNNPLGIMSDYDKIPFHPYYTIKDLLGVILLLLLFLTLALFFPDKLGDPDNYMPANPLNTPPHIKPEWYFLFAYAILRSIPNKLGGVIALALSILILAFLPYLHTSNQRSMMFRPLSQVLYWTLVTDLLLLTWIGGQPVEPPFIIIGQLASILYFSIILILMPTAGLIENKMLKW</sequence>
<protein>
    <recommendedName>
        <fullName>Cytochrome b</fullName>
    </recommendedName>
    <alternativeName>
        <fullName>Complex III subunit 3</fullName>
    </alternativeName>
    <alternativeName>
        <fullName>Complex III subunit III</fullName>
    </alternativeName>
    <alternativeName>
        <fullName>Cytochrome b-c1 complex subunit 3</fullName>
    </alternativeName>
    <alternativeName>
        <fullName>Ubiquinol-cytochrome-c reductase complex cytochrome b subunit</fullName>
    </alternativeName>
</protein>